<feature type="chain" id="PRO_0000324767" description="Kelch repeat and BTB domain-containing protein 12">
    <location>
        <begin position="1"/>
        <end position="625"/>
    </location>
</feature>
<feature type="domain" description="BTB" evidence="1">
    <location>
        <begin position="29"/>
        <end position="96"/>
    </location>
</feature>
<feature type="domain" description="BACK">
    <location>
        <begin position="131"/>
        <end position="233"/>
    </location>
</feature>
<feature type="repeat" description="Kelch 1">
    <location>
        <begin position="384"/>
        <end position="434"/>
    </location>
</feature>
<feature type="repeat" description="Kelch 2">
    <location>
        <begin position="435"/>
        <end position="490"/>
    </location>
</feature>
<feature type="repeat" description="Kelch 3">
    <location>
        <begin position="492"/>
        <end position="545"/>
    </location>
</feature>
<feature type="repeat" description="Kelch 4">
    <location>
        <begin position="551"/>
        <end position="601"/>
    </location>
</feature>
<feature type="splice variant" id="VSP_032356" description="In isoform 2." evidence="2">
    <original>YHDRGNQFWEKLCTAE</original>
    <variation>CVSHSRFGIFCFVLLR</variation>
    <location>
        <begin position="356"/>
        <end position="371"/>
    </location>
</feature>
<feature type="splice variant" id="VSP_032357" description="In isoform 2." evidence="2">
    <location>
        <begin position="372"/>
        <end position="625"/>
    </location>
</feature>
<feature type="sequence conflict" description="In Ref. 1; BAB29512." evidence="3" ref="1">
    <original>N</original>
    <variation>Y</variation>
    <location>
        <position position="96"/>
    </location>
</feature>
<keyword id="KW-0025">Alternative splicing</keyword>
<keyword id="KW-0880">Kelch repeat</keyword>
<keyword id="KW-1185">Reference proteome</keyword>
<keyword id="KW-0677">Repeat</keyword>
<evidence type="ECO:0000255" key="1">
    <source>
        <dbReference type="PROSITE-ProRule" id="PRU00037"/>
    </source>
</evidence>
<evidence type="ECO:0000303" key="2">
    <source>
    </source>
</evidence>
<evidence type="ECO:0000305" key="3"/>
<accession>Q9D618</accession>
<accession>E9QJU5</accession>
<dbReference type="EMBL" id="AK014702">
    <property type="protein sequence ID" value="BAB29512.1"/>
    <property type="molecule type" value="mRNA"/>
</dbReference>
<dbReference type="EMBL" id="AC154038">
    <property type="status" value="NOT_ANNOTATED_CDS"/>
    <property type="molecule type" value="Genomic_DNA"/>
</dbReference>
<dbReference type="CCDS" id="CCDS51842.2">
    <molecule id="Q9D618-1"/>
</dbReference>
<dbReference type="RefSeq" id="NP_001265600.1">
    <molecule id="Q9D618-1"/>
    <property type="nucleotide sequence ID" value="NM_001278671.2"/>
</dbReference>
<dbReference type="SMR" id="Q9D618"/>
<dbReference type="BioGRID" id="216866">
    <property type="interactions" value="1"/>
</dbReference>
<dbReference type="STRING" id="10090.ENSMUSP00000112581"/>
<dbReference type="iPTMnet" id="Q9D618"/>
<dbReference type="PhosphoSitePlus" id="Q9D618"/>
<dbReference type="jPOST" id="Q9D618"/>
<dbReference type="PaxDb" id="10090-ENSMUSP00000112581"/>
<dbReference type="ProteomicsDB" id="301753">
    <molecule id="Q9D618-1"/>
</dbReference>
<dbReference type="Antibodypedia" id="52602">
    <property type="antibodies" value="28 antibodies from 10 providers"/>
</dbReference>
<dbReference type="DNASU" id="74589"/>
<dbReference type="Ensembl" id="ENSMUST00000120933.5">
    <molecule id="Q9D618-1"/>
    <property type="protein sequence ID" value="ENSMUSP00000112581.2"/>
    <property type="gene ID" value="ENSMUSG00000033182.13"/>
</dbReference>
<dbReference type="GeneID" id="74589"/>
<dbReference type="KEGG" id="mmu:74589"/>
<dbReference type="UCSC" id="uc009cvk.3">
    <molecule id="Q9D618-1"/>
    <property type="organism name" value="mouse"/>
</dbReference>
<dbReference type="AGR" id="MGI:1918481"/>
<dbReference type="CTD" id="166348"/>
<dbReference type="MGI" id="MGI:1918481">
    <property type="gene designation" value="Kbtbd12"/>
</dbReference>
<dbReference type="VEuPathDB" id="HostDB:ENSMUSG00000033182"/>
<dbReference type="eggNOG" id="KOG4441">
    <property type="taxonomic scope" value="Eukaryota"/>
</dbReference>
<dbReference type="GeneTree" id="ENSGT00940000156836"/>
<dbReference type="HOGENOM" id="CLU_004253_14_2_1"/>
<dbReference type="InParanoid" id="Q9D618"/>
<dbReference type="OMA" id="DYWRDGP"/>
<dbReference type="OrthoDB" id="45365at2759"/>
<dbReference type="PhylomeDB" id="Q9D618"/>
<dbReference type="TreeFam" id="TF351656"/>
<dbReference type="BioGRID-ORCS" id="74589">
    <property type="hits" value="0 hits in 77 CRISPR screens"/>
</dbReference>
<dbReference type="ChiTaRS" id="Kbtbd12">
    <property type="organism name" value="mouse"/>
</dbReference>
<dbReference type="PRO" id="PR:Q9D618"/>
<dbReference type="Proteomes" id="UP000000589">
    <property type="component" value="Chromosome 6"/>
</dbReference>
<dbReference type="RNAct" id="Q9D618">
    <property type="molecule type" value="protein"/>
</dbReference>
<dbReference type="Bgee" id="ENSMUSG00000033182">
    <property type="expression patterns" value="Expressed in hindlimb stylopod muscle and 61 other cell types or tissues"/>
</dbReference>
<dbReference type="ExpressionAtlas" id="Q9D618">
    <property type="expression patterns" value="baseline and differential"/>
</dbReference>
<dbReference type="CDD" id="cd18485">
    <property type="entry name" value="BACK_KBTBD12"/>
    <property type="match status" value="1"/>
</dbReference>
<dbReference type="CDD" id="cd18276">
    <property type="entry name" value="BTB_POZ_KBTBD12"/>
    <property type="match status" value="1"/>
</dbReference>
<dbReference type="FunFam" id="1.25.40.420:FF:000001">
    <property type="entry name" value="Kelch-like family member 12"/>
    <property type="match status" value="1"/>
</dbReference>
<dbReference type="Gene3D" id="1.25.40.420">
    <property type="match status" value="1"/>
</dbReference>
<dbReference type="Gene3D" id="2.120.10.80">
    <property type="entry name" value="Kelch-type beta propeller"/>
    <property type="match status" value="1"/>
</dbReference>
<dbReference type="Gene3D" id="3.30.710.10">
    <property type="entry name" value="Potassium Channel Kv1.1, Chain A"/>
    <property type="match status" value="1"/>
</dbReference>
<dbReference type="InterPro" id="IPR011705">
    <property type="entry name" value="BACK"/>
</dbReference>
<dbReference type="InterPro" id="IPR017096">
    <property type="entry name" value="BTB-kelch_protein"/>
</dbReference>
<dbReference type="InterPro" id="IPR000210">
    <property type="entry name" value="BTB/POZ_dom"/>
</dbReference>
<dbReference type="InterPro" id="IPR015915">
    <property type="entry name" value="Kelch-typ_b-propeller"/>
</dbReference>
<dbReference type="InterPro" id="IPR006652">
    <property type="entry name" value="Kelch_1"/>
</dbReference>
<dbReference type="InterPro" id="IPR011333">
    <property type="entry name" value="SKP1/BTB/POZ_sf"/>
</dbReference>
<dbReference type="PANTHER" id="PTHR24412">
    <property type="entry name" value="KELCH PROTEIN"/>
    <property type="match status" value="1"/>
</dbReference>
<dbReference type="PANTHER" id="PTHR24412:SF491">
    <property type="entry name" value="KELCH REPEAT AND BTB DOMAIN-CONTAINING PROTEIN 12"/>
    <property type="match status" value="1"/>
</dbReference>
<dbReference type="Pfam" id="PF07707">
    <property type="entry name" value="BACK"/>
    <property type="match status" value="1"/>
</dbReference>
<dbReference type="Pfam" id="PF00651">
    <property type="entry name" value="BTB"/>
    <property type="match status" value="1"/>
</dbReference>
<dbReference type="Pfam" id="PF24681">
    <property type="entry name" value="Kelch_KLHDC2_KLHL20_DRC7"/>
    <property type="match status" value="1"/>
</dbReference>
<dbReference type="PIRSF" id="PIRSF037037">
    <property type="entry name" value="Kelch-like_protein_gigaxonin"/>
    <property type="match status" value="1"/>
</dbReference>
<dbReference type="SMART" id="SM00875">
    <property type="entry name" value="BACK"/>
    <property type="match status" value="1"/>
</dbReference>
<dbReference type="SMART" id="SM00225">
    <property type="entry name" value="BTB"/>
    <property type="match status" value="1"/>
</dbReference>
<dbReference type="SMART" id="SM00612">
    <property type="entry name" value="Kelch"/>
    <property type="match status" value="4"/>
</dbReference>
<dbReference type="SUPFAM" id="SSF117281">
    <property type="entry name" value="Kelch motif"/>
    <property type="match status" value="1"/>
</dbReference>
<dbReference type="SUPFAM" id="SSF54695">
    <property type="entry name" value="POZ domain"/>
    <property type="match status" value="1"/>
</dbReference>
<dbReference type="PROSITE" id="PS50097">
    <property type="entry name" value="BTB"/>
    <property type="match status" value="1"/>
</dbReference>
<sequence>MECKTKGKHQHSLNLLDKIKNMKELEEMIDVVLIAEEEKFPCHRLVLAAFSPYFKAMFTCGLLECTQREVILYDITAESVSVILNYMYSAVLEINNANVQTVAMAAYFMQMEEVFSVCQNYMMDHMDASNCIGIYYFAKQIGAEDLSDQSKKYLYQHFAEVSLHGEILDIEAHQLLALIKSDDLNISREESILDLVLRWVNHNQALRTEHLVELLKQVRLELINASFLRQALRRNTMLLCDGSCIDIIQNAFKAIKTPQQHPSNLRYGMETTSLLLCIGNNSSGIRSRHRSYGDASFCYDPVSHKTYFISSPKYGEGLGTVCTGVVMENNTVIVAGEATATRLSRQKSKNIEIYRYHDRGNQFWEKLCTAEFRELYALGSIHNDLYVIGGQMKIKNQYLITNCVDKYSVDQDNWKRVSPLPLQLACHAVVTVNNKLYVIGGWTPQMDLPDEEPDRLSNKLLQYDPSQDQWRERAPMRYSKYRFSAAVVNSEIYVLGGIGCVGRDKGQVRKCLDVVEIYNPDGDFWREGPPMPSPLLSLRTNSTSAGAVDGKLYVCGGFHGADRHEVISKEILELDPWENQWNVVAINVLMHDSYDVCLVARMNPRDLIPPPSDLIEEDGDHRGQR</sequence>
<reference key="1">
    <citation type="journal article" date="2005" name="Science">
        <title>The transcriptional landscape of the mammalian genome.</title>
        <authorList>
            <person name="Carninci P."/>
            <person name="Kasukawa T."/>
            <person name="Katayama S."/>
            <person name="Gough J."/>
            <person name="Frith M.C."/>
            <person name="Maeda N."/>
            <person name="Oyama R."/>
            <person name="Ravasi T."/>
            <person name="Lenhard B."/>
            <person name="Wells C."/>
            <person name="Kodzius R."/>
            <person name="Shimokawa K."/>
            <person name="Bajic V.B."/>
            <person name="Brenner S.E."/>
            <person name="Batalov S."/>
            <person name="Forrest A.R."/>
            <person name="Zavolan M."/>
            <person name="Davis M.J."/>
            <person name="Wilming L.G."/>
            <person name="Aidinis V."/>
            <person name="Allen J.E."/>
            <person name="Ambesi-Impiombato A."/>
            <person name="Apweiler R."/>
            <person name="Aturaliya R.N."/>
            <person name="Bailey T.L."/>
            <person name="Bansal M."/>
            <person name="Baxter L."/>
            <person name="Beisel K.W."/>
            <person name="Bersano T."/>
            <person name="Bono H."/>
            <person name="Chalk A.M."/>
            <person name="Chiu K.P."/>
            <person name="Choudhary V."/>
            <person name="Christoffels A."/>
            <person name="Clutterbuck D.R."/>
            <person name="Crowe M.L."/>
            <person name="Dalla E."/>
            <person name="Dalrymple B.P."/>
            <person name="de Bono B."/>
            <person name="Della Gatta G."/>
            <person name="di Bernardo D."/>
            <person name="Down T."/>
            <person name="Engstrom P."/>
            <person name="Fagiolini M."/>
            <person name="Faulkner G."/>
            <person name="Fletcher C.F."/>
            <person name="Fukushima T."/>
            <person name="Furuno M."/>
            <person name="Futaki S."/>
            <person name="Gariboldi M."/>
            <person name="Georgii-Hemming P."/>
            <person name="Gingeras T.R."/>
            <person name="Gojobori T."/>
            <person name="Green R.E."/>
            <person name="Gustincich S."/>
            <person name="Harbers M."/>
            <person name="Hayashi Y."/>
            <person name="Hensch T.K."/>
            <person name="Hirokawa N."/>
            <person name="Hill D."/>
            <person name="Huminiecki L."/>
            <person name="Iacono M."/>
            <person name="Ikeo K."/>
            <person name="Iwama A."/>
            <person name="Ishikawa T."/>
            <person name="Jakt M."/>
            <person name="Kanapin A."/>
            <person name="Katoh M."/>
            <person name="Kawasawa Y."/>
            <person name="Kelso J."/>
            <person name="Kitamura H."/>
            <person name="Kitano H."/>
            <person name="Kollias G."/>
            <person name="Krishnan S.P."/>
            <person name="Kruger A."/>
            <person name="Kummerfeld S.K."/>
            <person name="Kurochkin I.V."/>
            <person name="Lareau L.F."/>
            <person name="Lazarevic D."/>
            <person name="Lipovich L."/>
            <person name="Liu J."/>
            <person name="Liuni S."/>
            <person name="McWilliam S."/>
            <person name="Madan Babu M."/>
            <person name="Madera M."/>
            <person name="Marchionni L."/>
            <person name="Matsuda H."/>
            <person name="Matsuzawa S."/>
            <person name="Miki H."/>
            <person name="Mignone F."/>
            <person name="Miyake S."/>
            <person name="Morris K."/>
            <person name="Mottagui-Tabar S."/>
            <person name="Mulder N."/>
            <person name="Nakano N."/>
            <person name="Nakauchi H."/>
            <person name="Ng P."/>
            <person name="Nilsson R."/>
            <person name="Nishiguchi S."/>
            <person name="Nishikawa S."/>
            <person name="Nori F."/>
            <person name="Ohara O."/>
            <person name="Okazaki Y."/>
            <person name="Orlando V."/>
            <person name="Pang K.C."/>
            <person name="Pavan W.J."/>
            <person name="Pavesi G."/>
            <person name="Pesole G."/>
            <person name="Petrovsky N."/>
            <person name="Piazza S."/>
            <person name="Reed J."/>
            <person name="Reid J.F."/>
            <person name="Ring B.Z."/>
            <person name="Ringwald M."/>
            <person name="Rost B."/>
            <person name="Ruan Y."/>
            <person name="Salzberg S.L."/>
            <person name="Sandelin A."/>
            <person name="Schneider C."/>
            <person name="Schoenbach C."/>
            <person name="Sekiguchi K."/>
            <person name="Semple C.A."/>
            <person name="Seno S."/>
            <person name="Sessa L."/>
            <person name="Sheng Y."/>
            <person name="Shibata Y."/>
            <person name="Shimada H."/>
            <person name="Shimada K."/>
            <person name="Silva D."/>
            <person name="Sinclair B."/>
            <person name="Sperling S."/>
            <person name="Stupka E."/>
            <person name="Sugiura K."/>
            <person name="Sultana R."/>
            <person name="Takenaka Y."/>
            <person name="Taki K."/>
            <person name="Tammoja K."/>
            <person name="Tan S.L."/>
            <person name="Tang S."/>
            <person name="Taylor M.S."/>
            <person name="Tegner J."/>
            <person name="Teichmann S.A."/>
            <person name="Ueda H.R."/>
            <person name="van Nimwegen E."/>
            <person name="Verardo R."/>
            <person name="Wei C.L."/>
            <person name="Yagi K."/>
            <person name="Yamanishi H."/>
            <person name="Zabarovsky E."/>
            <person name="Zhu S."/>
            <person name="Zimmer A."/>
            <person name="Hide W."/>
            <person name="Bult C."/>
            <person name="Grimmond S.M."/>
            <person name="Teasdale R.D."/>
            <person name="Liu E.T."/>
            <person name="Brusic V."/>
            <person name="Quackenbush J."/>
            <person name="Wahlestedt C."/>
            <person name="Mattick J.S."/>
            <person name="Hume D.A."/>
            <person name="Kai C."/>
            <person name="Sasaki D."/>
            <person name="Tomaru Y."/>
            <person name="Fukuda S."/>
            <person name="Kanamori-Katayama M."/>
            <person name="Suzuki M."/>
            <person name="Aoki J."/>
            <person name="Arakawa T."/>
            <person name="Iida J."/>
            <person name="Imamura K."/>
            <person name="Itoh M."/>
            <person name="Kato T."/>
            <person name="Kawaji H."/>
            <person name="Kawagashira N."/>
            <person name="Kawashima T."/>
            <person name="Kojima M."/>
            <person name="Kondo S."/>
            <person name="Konno H."/>
            <person name="Nakano K."/>
            <person name="Ninomiya N."/>
            <person name="Nishio T."/>
            <person name="Okada M."/>
            <person name="Plessy C."/>
            <person name="Shibata K."/>
            <person name="Shiraki T."/>
            <person name="Suzuki S."/>
            <person name="Tagami M."/>
            <person name="Waki K."/>
            <person name="Watahiki A."/>
            <person name="Okamura-Oho Y."/>
            <person name="Suzuki H."/>
            <person name="Kawai J."/>
            <person name="Hayashizaki Y."/>
        </authorList>
    </citation>
    <scope>NUCLEOTIDE SEQUENCE [LARGE SCALE MRNA] (ISOFORM 2)</scope>
    <source>
        <strain>C57BL/6J</strain>
        <tissue>Head</tissue>
    </source>
</reference>
<reference key="2">
    <citation type="journal article" date="2009" name="PLoS Biol.">
        <title>Lineage-specific biology revealed by a finished genome assembly of the mouse.</title>
        <authorList>
            <person name="Church D.M."/>
            <person name="Goodstadt L."/>
            <person name="Hillier L.W."/>
            <person name="Zody M.C."/>
            <person name="Goldstein S."/>
            <person name="She X."/>
            <person name="Bult C.J."/>
            <person name="Agarwala R."/>
            <person name="Cherry J.L."/>
            <person name="DiCuccio M."/>
            <person name="Hlavina W."/>
            <person name="Kapustin Y."/>
            <person name="Meric P."/>
            <person name="Maglott D."/>
            <person name="Birtle Z."/>
            <person name="Marques A.C."/>
            <person name="Graves T."/>
            <person name="Zhou S."/>
            <person name="Teague B."/>
            <person name="Potamousis K."/>
            <person name="Churas C."/>
            <person name="Place M."/>
            <person name="Herschleb J."/>
            <person name="Runnheim R."/>
            <person name="Forrest D."/>
            <person name="Amos-Landgraf J."/>
            <person name="Schwartz D.C."/>
            <person name="Cheng Z."/>
            <person name="Lindblad-Toh K."/>
            <person name="Eichler E.E."/>
            <person name="Ponting C.P."/>
        </authorList>
    </citation>
    <scope>NUCLEOTIDE SEQUENCE [LARGE SCALE GENOMIC DNA]</scope>
    <source>
        <strain>C57BL/6J</strain>
    </source>
</reference>
<protein>
    <recommendedName>
        <fullName>Kelch repeat and BTB domain-containing protein 12</fullName>
    </recommendedName>
    <alternativeName>
        <fullName>Kelch domain-containing protein 6</fullName>
    </alternativeName>
</protein>
<comment type="alternative products">
    <event type="alternative splicing"/>
    <isoform>
        <id>Q9D618-1</id>
        <name>1</name>
        <sequence type="displayed"/>
    </isoform>
    <isoform>
        <id>Q9D618-2</id>
        <name>2</name>
        <sequence type="described" ref="VSP_032356 VSP_032357"/>
    </isoform>
</comment>
<comment type="miscellaneous">
    <molecule>Isoform 2</molecule>
    <text evidence="3">Due to intron retention.</text>
</comment>
<gene>
    <name type="primary">Kbtbd12</name>
    <name type="synonym">Klhdc6</name>
</gene>
<name>KBTBC_MOUSE</name>
<proteinExistence type="evidence at transcript level"/>
<organism>
    <name type="scientific">Mus musculus</name>
    <name type="common">Mouse</name>
    <dbReference type="NCBI Taxonomy" id="10090"/>
    <lineage>
        <taxon>Eukaryota</taxon>
        <taxon>Metazoa</taxon>
        <taxon>Chordata</taxon>
        <taxon>Craniata</taxon>
        <taxon>Vertebrata</taxon>
        <taxon>Euteleostomi</taxon>
        <taxon>Mammalia</taxon>
        <taxon>Eutheria</taxon>
        <taxon>Euarchontoglires</taxon>
        <taxon>Glires</taxon>
        <taxon>Rodentia</taxon>
        <taxon>Myomorpha</taxon>
        <taxon>Muroidea</taxon>
        <taxon>Muridae</taxon>
        <taxon>Murinae</taxon>
        <taxon>Mus</taxon>
        <taxon>Mus</taxon>
    </lineage>
</organism>